<evidence type="ECO:0000255" key="1">
    <source>
        <dbReference type="HAMAP-Rule" id="MF_00537"/>
    </source>
</evidence>
<evidence type="ECO:0000305" key="2"/>
<dbReference type="EMBL" id="CP000937">
    <property type="protein sequence ID" value="ABZ86792.1"/>
    <property type="molecule type" value="Genomic_DNA"/>
</dbReference>
<dbReference type="SMR" id="B0U0X6"/>
<dbReference type="KEGG" id="fph:Fphi_0574"/>
<dbReference type="eggNOG" id="COG0199">
    <property type="taxonomic scope" value="Bacteria"/>
</dbReference>
<dbReference type="HOGENOM" id="CLU_139869_0_1_6"/>
<dbReference type="GO" id="GO:0005737">
    <property type="term" value="C:cytoplasm"/>
    <property type="evidence" value="ECO:0007669"/>
    <property type="project" value="UniProtKB-ARBA"/>
</dbReference>
<dbReference type="GO" id="GO:0015935">
    <property type="term" value="C:small ribosomal subunit"/>
    <property type="evidence" value="ECO:0007669"/>
    <property type="project" value="TreeGrafter"/>
</dbReference>
<dbReference type="GO" id="GO:0019843">
    <property type="term" value="F:rRNA binding"/>
    <property type="evidence" value="ECO:0007669"/>
    <property type="project" value="UniProtKB-UniRule"/>
</dbReference>
<dbReference type="GO" id="GO:0003735">
    <property type="term" value="F:structural constituent of ribosome"/>
    <property type="evidence" value="ECO:0007669"/>
    <property type="project" value="InterPro"/>
</dbReference>
<dbReference type="GO" id="GO:0006412">
    <property type="term" value="P:translation"/>
    <property type="evidence" value="ECO:0007669"/>
    <property type="project" value="UniProtKB-UniRule"/>
</dbReference>
<dbReference type="FunFam" id="1.10.287.1480:FF:000001">
    <property type="entry name" value="30S ribosomal protein S14"/>
    <property type="match status" value="1"/>
</dbReference>
<dbReference type="Gene3D" id="1.10.287.1480">
    <property type="match status" value="1"/>
</dbReference>
<dbReference type="HAMAP" id="MF_00537">
    <property type="entry name" value="Ribosomal_uS14_1"/>
    <property type="match status" value="1"/>
</dbReference>
<dbReference type="InterPro" id="IPR001209">
    <property type="entry name" value="Ribosomal_uS14"/>
</dbReference>
<dbReference type="InterPro" id="IPR023036">
    <property type="entry name" value="Ribosomal_uS14_bac/plastid"/>
</dbReference>
<dbReference type="InterPro" id="IPR018271">
    <property type="entry name" value="Ribosomal_uS14_CS"/>
</dbReference>
<dbReference type="NCBIfam" id="NF006477">
    <property type="entry name" value="PRK08881.1"/>
    <property type="match status" value="1"/>
</dbReference>
<dbReference type="PANTHER" id="PTHR19836">
    <property type="entry name" value="30S RIBOSOMAL PROTEIN S14"/>
    <property type="match status" value="1"/>
</dbReference>
<dbReference type="PANTHER" id="PTHR19836:SF19">
    <property type="entry name" value="SMALL RIBOSOMAL SUBUNIT PROTEIN US14M"/>
    <property type="match status" value="1"/>
</dbReference>
<dbReference type="Pfam" id="PF00253">
    <property type="entry name" value="Ribosomal_S14"/>
    <property type="match status" value="1"/>
</dbReference>
<dbReference type="SUPFAM" id="SSF57716">
    <property type="entry name" value="Glucocorticoid receptor-like (DNA-binding domain)"/>
    <property type="match status" value="1"/>
</dbReference>
<dbReference type="PROSITE" id="PS00527">
    <property type="entry name" value="RIBOSOMAL_S14"/>
    <property type="match status" value="1"/>
</dbReference>
<feature type="chain" id="PRO_1000128406" description="Small ribosomal subunit protein uS14">
    <location>
        <begin position="1"/>
        <end position="101"/>
    </location>
</feature>
<accession>B0U0X6</accession>
<comment type="function">
    <text evidence="1">Binds 16S rRNA, required for the assembly of 30S particles and may also be responsible for determining the conformation of the 16S rRNA at the A site.</text>
</comment>
<comment type="subunit">
    <text evidence="1">Part of the 30S ribosomal subunit. Contacts proteins S3 and S10.</text>
</comment>
<comment type="similarity">
    <text evidence="1">Belongs to the universal ribosomal protein uS14 family.</text>
</comment>
<sequence>MAKKSMIQRELKREKLVAKYAQKRAELKAIILDINSTEEQVWEAQIKLQKLPVNSSASRVQRRCKVTGRPHAVYRKFGLCRNKLREYAMAGDVPGLKKASW</sequence>
<protein>
    <recommendedName>
        <fullName evidence="1">Small ribosomal subunit protein uS14</fullName>
    </recommendedName>
    <alternativeName>
        <fullName evidence="2">30S ribosomal protein S14</fullName>
    </alternativeName>
</protein>
<proteinExistence type="inferred from homology"/>
<name>RS14_FRAP2</name>
<organism>
    <name type="scientific">Francisella philomiragia subsp. philomiragia (strain ATCC 25017 / CCUG 19701 / FSC 153 / O#319-036)</name>
    <dbReference type="NCBI Taxonomy" id="484022"/>
    <lineage>
        <taxon>Bacteria</taxon>
        <taxon>Pseudomonadati</taxon>
        <taxon>Pseudomonadota</taxon>
        <taxon>Gammaproteobacteria</taxon>
        <taxon>Thiotrichales</taxon>
        <taxon>Francisellaceae</taxon>
        <taxon>Francisella</taxon>
    </lineage>
</organism>
<gene>
    <name evidence="1" type="primary">rpsN</name>
    <name type="ordered locus">Fphi_0574</name>
</gene>
<keyword id="KW-0687">Ribonucleoprotein</keyword>
<keyword id="KW-0689">Ribosomal protein</keyword>
<keyword id="KW-0694">RNA-binding</keyword>
<keyword id="KW-0699">rRNA-binding</keyword>
<reference key="1">
    <citation type="submission" date="2007-12" db="EMBL/GenBank/DDBJ databases">
        <title>Complete sequence of chromosome of Francisella philomiragia subsp. philomiragia ATCC 25017.</title>
        <authorList>
            <consortium name="US DOE Joint Genome Institute"/>
            <person name="Copeland A."/>
            <person name="Lucas S."/>
            <person name="Lapidus A."/>
            <person name="Barry K."/>
            <person name="Detter J.C."/>
            <person name="Glavina del Rio T."/>
            <person name="Hammon N."/>
            <person name="Israni S."/>
            <person name="Dalin E."/>
            <person name="Tice H."/>
            <person name="Pitluck S."/>
            <person name="Chain P."/>
            <person name="Malfatti S."/>
            <person name="Shin M."/>
            <person name="Vergez L."/>
            <person name="Schmutz J."/>
            <person name="Larimer F."/>
            <person name="Land M."/>
            <person name="Hauser L."/>
            <person name="Richardson P."/>
        </authorList>
    </citation>
    <scope>NUCLEOTIDE SEQUENCE [LARGE SCALE GENOMIC DNA]</scope>
    <source>
        <strain>ATCC 25017 / CCUG 19701 / FSC 153 / O#319-036</strain>
    </source>
</reference>